<evidence type="ECO:0000250" key="1">
    <source>
        <dbReference type="UniProtKB" id="P0A988"/>
    </source>
</evidence>
<evidence type="ECO:0000305" key="2"/>
<gene>
    <name type="primary">dnaN</name>
</gene>
<organism>
    <name type="scientific">Buchnera aphidicola subsp. Rhopalosiphum padi</name>
    <dbReference type="NCBI Taxonomy" id="98793"/>
    <lineage>
        <taxon>Bacteria</taxon>
        <taxon>Pseudomonadati</taxon>
        <taxon>Pseudomonadota</taxon>
        <taxon>Gammaproteobacteria</taxon>
        <taxon>Enterobacterales</taxon>
        <taxon>Erwiniaceae</taxon>
        <taxon>Buchnera</taxon>
    </lineage>
</organism>
<dbReference type="EMBL" id="AF197896">
    <property type="protein sequence ID" value="AAG33956.1"/>
    <property type="molecule type" value="Genomic_DNA"/>
</dbReference>
<dbReference type="SMR" id="Q9EVE4"/>
<dbReference type="GO" id="GO:0005737">
    <property type="term" value="C:cytoplasm"/>
    <property type="evidence" value="ECO:0007669"/>
    <property type="project" value="UniProtKB-SubCell"/>
</dbReference>
<dbReference type="GO" id="GO:0009360">
    <property type="term" value="C:DNA polymerase III complex"/>
    <property type="evidence" value="ECO:0007669"/>
    <property type="project" value="InterPro"/>
</dbReference>
<dbReference type="GO" id="GO:0008408">
    <property type="term" value="F:3'-5' exonuclease activity"/>
    <property type="evidence" value="ECO:0007669"/>
    <property type="project" value="InterPro"/>
</dbReference>
<dbReference type="GO" id="GO:0003677">
    <property type="term" value="F:DNA binding"/>
    <property type="evidence" value="ECO:0007669"/>
    <property type="project" value="UniProtKB-KW"/>
</dbReference>
<dbReference type="GO" id="GO:0003887">
    <property type="term" value="F:DNA-directed DNA polymerase activity"/>
    <property type="evidence" value="ECO:0007669"/>
    <property type="project" value="UniProtKB-KW"/>
</dbReference>
<dbReference type="GO" id="GO:0006271">
    <property type="term" value="P:DNA strand elongation involved in DNA replication"/>
    <property type="evidence" value="ECO:0007669"/>
    <property type="project" value="TreeGrafter"/>
</dbReference>
<dbReference type="CDD" id="cd00140">
    <property type="entry name" value="beta_clamp"/>
    <property type="match status" value="1"/>
</dbReference>
<dbReference type="Gene3D" id="3.70.10.10">
    <property type="match status" value="1"/>
</dbReference>
<dbReference type="Gene3D" id="3.10.150.10">
    <property type="entry name" value="DNA Polymerase III, subunit A, domain 2"/>
    <property type="match status" value="1"/>
</dbReference>
<dbReference type="InterPro" id="IPR046938">
    <property type="entry name" value="DNA_clamp_sf"/>
</dbReference>
<dbReference type="InterPro" id="IPR001001">
    <property type="entry name" value="DNA_polIII_beta"/>
</dbReference>
<dbReference type="InterPro" id="IPR022635">
    <property type="entry name" value="DNA_polIII_beta_C"/>
</dbReference>
<dbReference type="InterPro" id="IPR022637">
    <property type="entry name" value="DNA_polIII_beta_cen"/>
</dbReference>
<dbReference type="InterPro" id="IPR022634">
    <property type="entry name" value="DNA_polIII_beta_N"/>
</dbReference>
<dbReference type="NCBIfam" id="TIGR00663">
    <property type="entry name" value="dnan"/>
    <property type="match status" value="1"/>
</dbReference>
<dbReference type="PANTHER" id="PTHR30478:SF0">
    <property type="entry name" value="BETA SLIDING CLAMP"/>
    <property type="match status" value="1"/>
</dbReference>
<dbReference type="PANTHER" id="PTHR30478">
    <property type="entry name" value="DNA POLYMERASE III SUBUNIT BETA"/>
    <property type="match status" value="1"/>
</dbReference>
<dbReference type="Pfam" id="PF00712">
    <property type="entry name" value="DNA_pol3_beta"/>
    <property type="match status" value="1"/>
</dbReference>
<dbReference type="Pfam" id="PF02767">
    <property type="entry name" value="DNA_pol3_beta_2"/>
    <property type="match status" value="1"/>
</dbReference>
<dbReference type="Pfam" id="PF02768">
    <property type="entry name" value="DNA_pol3_beta_3"/>
    <property type="match status" value="1"/>
</dbReference>
<dbReference type="PIRSF" id="PIRSF000804">
    <property type="entry name" value="DNA_pol_III_b"/>
    <property type="match status" value="1"/>
</dbReference>
<dbReference type="SMART" id="SM00480">
    <property type="entry name" value="POL3Bc"/>
    <property type="match status" value="1"/>
</dbReference>
<dbReference type="SUPFAM" id="SSF55979">
    <property type="entry name" value="DNA clamp"/>
    <property type="match status" value="3"/>
</dbReference>
<sequence>MKFTIQNDILVENLKKITRLLIKNVSFPILENILIQIENGILSLTTTNLEIELVSKIKIITKYTPGKITISGRKILNICRNLSEKSEVKMPLKEKKMYVSCENSNYILSTLSADDFPNHQNFNHISNFHISSNILKEMIEKTEFSMGKQDVRYYLNGMLLEKKDNFLRSVATDGYRLAISYSKLEKDINFFSIIIPSKAVMELSRLLNTQVQLLNILIGTNSIRIYIKDLIFTTQLIEGEYPDYESVLFKEKKNPIIANCTLLKKSLLRAAILAHEKFCGIEIKIEKNKFKVLSDNQEEETAEDLFDINYLGDTIEISINVYYLLDVINNIKSENIILFLNKSKSSIQIEAENNSLNAYIIMLLKR</sequence>
<accession>Q9EVE4</accession>
<feature type="chain" id="PRO_0000105429" description="Beta sliding clamp">
    <location>
        <begin position="1"/>
        <end position="366"/>
    </location>
</feature>
<comment type="function">
    <text evidence="1">Confers DNA tethering and processivity to DNA polymerases and other proteins. Acts as a clamp, forming a ring around DNA (a reaction catalyzed by the clamp-loading complex) which diffuses in an ATP-independent manner freely and bidirectionally along dsDNA. Initially characterized for its ability to contact the catalytic subunit of DNA polymerase III (Pol III), a complex, multichain enzyme responsible for most of the replicative synthesis in bacteria; Pol III exhibits 3'-5' exonuclease proofreading activity. The beta chain is required for initiation of replication as well as for processivity of DNA replication.</text>
</comment>
<comment type="subunit">
    <text evidence="1">Forms a ring-shaped head-to-tail homodimer around DNA which binds and tethers DNA polymerases and other proteins to the DNA. The DNA replisome complex has a single clamp-loading complex (3 tau and 1 each of delta, delta', psi and chi subunits) which binds 3 Pol III cores (1 core on the leading strand and 2 on the lagging strand) each with a beta sliding clamp dimer. Additional proteins in the replisome are other copies of gamma, psi and chi, Ssb, DNA helicase and RNA primase.</text>
</comment>
<comment type="subcellular location">
    <subcellularLocation>
        <location evidence="1">Cytoplasm</location>
    </subcellularLocation>
</comment>
<comment type="similarity">
    <text evidence="2">Belongs to the beta sliding clamp family.</text>
</comment>
<reference key="1">
    <citation type="journal article" date="2001" name="J. Bacteriol.">
        <title>Vertical transmission of biosynthetic plasmids in aphid endosymbionts (Buchnera).</title>
        <authorList>
            <person name="Wernegreen J.J."/>
            <person name="Moran N.A."/>
        </authorList>
    </citation>
    <scope>NUCLEOTIDE SEQUENCE [GENOMIC DNA]</scope>
</reference>
<proteinExistence type="inferred from homology"/>
<protein>
    <recommendedName>
        <fullName>Beta sliding clamp</fullName>
        <shortName>Beta clamp</shortName>
        <shortName>Sliding clamp</shortName>
    </recommendedName>
    <alternativeName>
        <fullName>Beta-clamp processivity factor</fullName>
    </alternativeName>
    <alternativeName>
        <fullName>DNA polymerase III beta sliding clamp subunit</fullName>
    </alternativeName>
    <alternativeName>
        <fullName>DNA polymerase III subunit beta</fullName>
    </alternativeName>
</protein>
<name>DPO3B_BUCRP</name>
<keyword id="KW-0963">Cytoplasm</keyword>
<keyword id="KW-0235">DNA replication</keyword>
<keyword id="KW-0238">DNA-binding</keyword>
<keyword id="KW-0239">DNA-directed DNA polymerase</keyword>
<keyword id="KW-0548">Nucleotidyltransferase</keyword>
<keyword id="KW-0808">Transferase</keyword>